<dbReference type="EC" id="6.3.4.16" evidence="1"/>
<dbReference type="EC" id="6.3.5.5" evidence="1"/>
<dbReference type="EMBL" id="CP001215">
    <property type="protein sequence ID" value="ACP14812.1"/>
    <property type="molecule type" value="Genomic_DNA"/>
</dbReference>
<dbReference type="RefSeq" id="WP_001126118.1">
    <property type="nucleotide sequence ID" value="NC_012581.1"/>
</dbReference>
<dbReference type="SMR" id="C3L740"/>
<dbReference type="GeneID" id="45023715"/>
<dbReference type="KEGG" id="bah:BAMEG_0606"/>
<dbReference type="HOGENOM" id="CLU_000513_1_0_9"/>
<dbReference type="UniPathway" id="UPA00068">
    <property type="reaction ID" value="UER00171"/>
</dbReference>
<dbReference type="UniPathway" id="UPA00070">
    <property type="reaction ID" value="UER00115"/>
</dbReference>
<dbReference type="GO" id="GO:0005737">
    <property type="term" value="C:cytoplasm"/>
    <property type="evidence" value="ECO:0007669"/>
    <property type="project" value="TreeGrafter"/>
</dbReference>
<dbReference type="GO" id="GO:0005524">
    <property type="term" value="F:ATP binding"/>
    <property type="evidence" value="ECO:0007669"/>
    <property type="project" value="UniProtKB-UniRule"/>
</dbReference>
<dbReference type="GO" id="GO:0004087">
    <property type="term" value="F:carbamoyl-phosphate synthase (ammonia) activity"/>
    <property type="evidence" value="ECO:0007669"/>
    <property type="project" value="RHEA"/>
</dbReference>
<dbReference type="GO" id="GO:0004088">
    <property type="term" value="F:carbamoyl-phosphate synthase (glutamine-hydrolyzing) activity"/>
    <property type="evidence" value="ECO:0007669"/>
    <property type="project" value="UniProtKB-UniRule"/>
</dbReference>
<dbReference type="GO" id="GO:0046872">
    <property type="term" value="F:metal ion binding"/>
    <property type="evidence" value="ECO:0007669"/>
    <property type="project" value="UniProtKB-KW"/>
</dbReference>
<dbReference type="GO" id="GO:0044205">
    <property type="term" value="P:'de novo' UMP biosynthetic process"/>
    <property type="evidence" value="ECO:0007669"/>
    <property type="project" value="UniProtKB-UniRule"/>
</dbReference>
<dbReference type="GO" id="GO:0006541">
    <property type="term" value="P:glutamine metabolic process"/>
    <property type="evidence" value="ECO:0007669"/>
    <property type="project" value="TreeGrafter"/>
</dbReference>
<dbReference type="GO" id="GO:0006526">
    <property type="term" value="P:L-arginine biosynthetic process"/>
    <property type="evidence" value="ECO:0007669"/>
    <property type="project" value="UniProtKB-UniRule"/>
</dbReference>
<dbReference type="CDD" id="cd01424">
    <property type="entry name" value="MGS_CPS_II"/>
    <property type="match status" value="1"/>
</dbReference>
<dbReference type="FunFam" id="1.10.1030.10:FF:000002">
    <property type="entry name" value="Carbamoyl-phosphate synthase large chain"/>
    <property type="match status" value="1"/>
</dbReference>
<dbReference type="FunFam" id="3.30.1490.20:FF:000001">
    <property type="entry name" value="Carbamoyl-phosphate synthase large chain"/>
    <property type="match status" value="1"/>
</dbReference>
<dbReference type="FunFam" id="3.30.470.20:FF:000001">
    <property type="entry name" value="Carbamoyl-phosphate synthase large chain"/>
    <property type="match status" value="1"/>
</dbReference>
<dbReference type="FunFam" id="3.30.470.20:FF:000026">
    <property type="entry name" value="Carbamoyl-phosphate synthase large chain"/>
    <property type="match status" value="1"/>
</dbReference>
<dbReference type="FunFam" id="3.40.50.1380:FF:000011">
    <property type="entry name" value="Carbamoyl-phosphate synthase large chain"/>
    <property type="match status" value="1"/>
</dbReference>
<dbReference type="FunFam" id="3.40.50.20:FF:000001">
    <property type="entry name" value="Carbamoyl-phosphate synthase large chain"/>
    <property type="match status" value="2"/>
</dbReference>
<dbReference type="Gene3D" id="3.40.50.20">
    <property type="match status" value="2"/>
</dbReference>
<dbReference type="Gene3D" id="3.30.1490.20">
    <property type="entry name" value="ATP-grasp fold, A domain"/>
    <property type="match status" value="1"/>
</dbReference>
<dbReference type="Gene3D" id="3.30.470.20">
    <property type="entry name" value="ATP-grasp fold, B domain"/>
    <property type="match status" value="2"/>
</dbReference>
<dbReference type="Gene3D" id="1.10.1030.10">
    <property type="entry name" value="Carbamoyl-phosphate synthetase, large subunit oligomerisation domain"/>
    <property type="match status" value="1"/>
</dbReference>
<dbReference type="Gene3D" id="3.40.50.1380">
    <property type="entry name" value="Methylglyoxal synthase-like domain"/>
    <property type="match status" value="1"/>
</dbReference>
<dbReference type="HAMAP" id="MF_01210_A">
    <property type="entry name" value="CPSase_L_chain_A"/>
    <property type="match status" value="1"/>
</dbReference>
<dbReference type="HAMAP" id="MF_01210_B">
    <property type="entry name" value="CPSase_L_chain_B"/>
    <property type="match status" value="1"/>
</dbReference>
<dbReference type="InterPro" id="IPR011761">
    <property type="entry name" value="ATP-grasp"/>
</dbReference>
<dbReference type="InterPro" id="IPR013815">
    <property type="entry name" value="ATP_grasp_subdomain_1"/>
</dbReference>
<dbReference type="InterPro" id="IPR006275">
    <property type="entry name" value="CarbamoylP_synth_lsu"/>
</dbReference>
<dbReference type="InterPro" id="IPR005480">
    <property type="entry name" value="CarbamoylP_synth_lsu_oligo"/>
</dbReference>
<dbReference type="InterPro" id="IPR036897">
    <property type="entry name" value="CarbamoylP_synth_lsu_oligo_sf"/>
</dbReference>
<dbReference type="InterPro" id="IPR005479">
    <property type="entry name" value="CbamoylP_synth_lsu-like_ATP-bd"/>
</dbReference>
<dbReference type="InterPro" id="IPR005483">
    <property type="entry name" value="CbamoylP_synth_lsu_CPSase_dom"/>
</dbReference>
<dbReference type="InterPro" id="IPR011607">
    <property type="entry name" value="MGS-like_dom"/>
</dbReference>
<dbReference type="InterPro" id="IPR036914">
    <property type="entry name" value="MGS-like_dom_sf"/>
</dbReference>
<dbReference type="InterPro" id="IPR033937">
    <property type="entry name" value="MGS_CPS_CarB"/>
</dbReference>
<dbReference type="InterPro" id="IPR016185">
    <property type="entry name" value="PreATP-grasp_dom_sf"/>
</dbReference>
<dbReference type="NCBIfam" id="TIGR01369">
    <property type="entry name" value="CPSaseII_lrg"/>
    <property type="match status" value="1"/>
</dbReference>
<dbReference type="NCBIfam" id="NF003671">
    <property type="entry name" value="PRK05294.1"/>
    <property type="match status" value="1"/>
</dbReference>
<dbReference type="NCBIfam" id="NF009455">
    <property type="entry name" value="PRK12815.1"/>
    <property type="match status" value="1"/>
</dbReference>
<dbReference type="PANTHER" id="PTHR11405:SF53">
    <property type="entry name" value="CARBAMOYL-PHOSPHATE SYNTHASE [AMMONIA], MITOCHONDRIAL"/>
    <property type="match status" value="1"/>
</dbReference>
<dbReference type="PANTHER" id="PTHR11405">
    <property type="entry name" value="CARBAMOYLTRANSFERASE FAMILY MEMBER"/>
    <property type="match status" value="1"/>
</dbReference>
<dbReference type="Pfam" id="PF02786">
    <property type="entry name" value="CPSase_L_D2"/>
    <property type="match status" value="2"/>
</dbReference>
<dbReference type="Pfam" id="PF02787">
    <property type="entry name" value="CPSase_L_D3"/>
    <property type="match status" value="1"/>
</dbReference>
<dbReference type="Pfam" id="PF02142">
    <property type="entry name" value="MGS"/>
    <property type="match status" value="1"/>
</dbReference>
<dbReference type="PRINTS" id="PR00098">
    <property type="entry name" value="CPSASE"/>
</dbReference>
<dbReference type="SMART" id="SM01096">
    <property type="entry name" value="CPSase_L_D3"/>
    <property type="match status" value="1"/>
</dbReference>
<dbReference type="SMART" id="SM01209">
    <property type="entry name" value="GARS_A"/>
    <property type="match status" value="1"/>
</dbReference>
<dbReference type="SMART" id="SM00851">
    <property type="entry name" value="MGS"/>
    <property type="match status" value="1"/>
</dbReference>
<dbReference type="SUPFAM" id="SSF48108">
    <property type="entry name" value="Carbamoyl phosphate synthetase, large subunit connection domain"/>
    <property type="match status" value="1"/>
</dbReference>
<dbReference type="SUPFAM" id="SSF56059">
    <property type="entry name" value="Glutathione synthetase ATP-binding domain-like"/>
    <property type="match status" value="2"/>
</dbReference>
<dbReference type="SUPFAM" id="SSF52335">
    <property type="entry name" value="Methylglyoxal synthase-like"/>
    <property type="match status" value="1"/>
</dbReference>
<dbReference type="SUPFAM" id="SSF52440">
    <property type="entry name" value="PreATP-grasp domain"/>
    <property type="match status" value="2"/>
</dbReference>
<dbReference type="PROSITE" id="PS50975">
    <property type="entry name" value="ATP_GRASP"/>
    <property type="match status" value="2"/>
</dbReference>
<dbReference type="PROSITE" id="PS00866">
    <property type="entry name" value="CPSASE_1"/>
    <property type="match status" value="2"/>
</dbReference>
<dbReference type="PROSITE" id="PS00867">
    <property type="entry name" value="CPSASE_2"/>
    <property type="match status" value="2"/>
</dbReference>
<dbReference type="PROSITE" id="PS51855">
    <property type="entry name" value="MGS"/>
    <property type="match status" value="1"/>
</dbReference>
<name>CARB_BACAC</name>
<comment type="function">
    <text evidence="1">Large subunit of the glutamine-dependent carbamoyl phosphate synthetase (CPSase). CPSase catalyzes the formation of carbamoyl phosphate from the ammonia moiety of glutamine, carbonate, and phosphate donated by ATP, constituting the first step of 2 biosynthetic pathways, one leading to arginine and/or urea and the other to pyrimidine nucleotides. The large subunit (synthetase) binds the substrates ammonia (free or transferred from glutamine from the small subunit), hydrogencarbonate and ATP and carries out an ATP-coupled ligase reaction, activating hydrogencarbonate by forming carboxy phosphate which reacts with ammonia to form carbamoyl phosphate.</text>
</comment>
<comment type="catalytic activity">
    <reaction evidence="1">
        <text>hydrogencarbonate + L-glutamine + 2 ATP + H2O = carbamoyl phosphate + L-glutamate + 2 ADP + phosphate + 2 H(+)</text>
        <dbReference type="Rhea" id="RHEA:18633"/>
        <dbReference type="ChEBI" id="CHEBI:15377"/>
        <dbReference type="ChEBI" id="CHEBI:15378"/>
        <dbReference type="ChEBI" id="CHEBI:17544"/>
        <dbReference type="ChEBI" id="CHEBI:29985"/>
        <dbReference type="ChEBI" id="CHEBI:30616"/>
        <dbReference type="ChEBI" id="CHEBI:43474"/>
        <dbReference type="ChEBI" id="CHEBI:58228"/>
        <dbReference type="ChEBI" id="CHEBI:58359"/>
        <dbReference type="ChEBI" id="CHEBI:456216"/>
        <dbReference type="EC" id="6.3.5.5"/>
    </reaction>
</comment>
<comment type="catalytic activity">
    <molecule>Carbamoyl phosphate synthase large chain</molecule>
    <reaction evidence="1">
        <text>hydrogencarbonate + NH4(+) + 2 ATP = carbamoyl phosphate + 2 ADP + phosphate + 2 H(+)</text>
        <dbReference type="Rhea" id="RHEA:18029"/>
        <dbReference type="ChEBI" id="CHEBI:15378"/>
        <dbReference type="ChEBI" id="CHEBI:17544"/>
        <dbReference type="ChEBI" id="CHEBI:28938"/>
        <dbReference type="ChEBI" id="CHEBI:30616"/>
        <dbReference type="ChEBI" id="CHEBI:43474"/>
        <dbReference type="ChEBI" id="CHEBI:58228"/>
        <dbReference type="ChEBI" id="CHEBI:456216"/>
        <dbReference type="EC" id="6.3.4.16"/>
    </reaction>
</comment>
<comment type="cofactor">
    <cofactor evidence="1">
        <name>Mg(2+)</name>
        <dbReference type="ChEBI" id="CHEBI:18420"/>
    </cofactor>
    <cofactor evidence="1">
        <name>Mn(2+)</name>
        <dbReference type="ChEBI" id="CHEBI:29035"/>
    </cofactor>
    <text evidence="1">Binds 4 Mg(2+) or Mn(2+) ions per subunit.</text>
</comment>
<comment type="pathway">
    <text evidence="1">Amino-acid biosynthesis; L-arginine biosynthesis; carbamoyl phosphate from bicarbonate: step 1/1.</text>
</comment>
<comment type="pathway">
    <text evidence="1">Pyrimidine metabolism; UMP biosynthesis via de novo pathway; (S)-dihydroorotate from bicarbonate: step 1/3.</text>
</comment>
<comment type="subunit">
    <text evidence="1">Composed of two chains; the small (or glutamine) chain promotes the hydrolysis of glutamine to ammonia, which is used by the large (or ammonia) chain to synthesize carbamoyl phosphate. Tetramer of heterodimers (alpha,beta)4.</text>
</comment>
<comment type="domain">
    <text evidence="1">The large subunit is composed of 2 ATP-grasp domains that are involved in binding the 2 ATP molecules needed for carbamoyl phosphate synthesis. The N-terminal ATP-grasp domain (referred to as the carboxyphosphate synthetic component) catalyzes the ATP-dependent phosphorylation of hydrogencarbonate to carboxyphosphate and the subsequent nucleophilic attack by ammonia to form a carbamate intermediate. The C-terminal ATP-grasp domain (referred to as the carbamoyl phosphate synthetic component) then catalyzes the phosphorylation of carbamate with the second ATP to form the end product carbamoyl phosphate. The reactive and unstable enzyme intermediates are sequentially channeled from one active site to the next through the interior of the protein over a distance of at least 96 A.</text>
</comment>
<comment type="similarity">
    <text evidence="1">Belongs to the CarB family.</text>
</comment>
<sequence length="1072" mass="118664">MPKRLDINTILVIGSGPIVIGQAAEFDYSGTQACQSLKEEGYKVILVNSNPATIMTDTATADKVYIEPLTLEFVSRIIRKERPDAILPTLGGQTGLNMAVELAKSGVLEECGVEILGTKLSAIEQAEDRDLFRTLMQELNEPTPPSEIIHNLDEAYGFVNEIGYPVIVRPAFTLGGTGGGICHNEEELIEIVTSGLKHSPVTQCLLEKSIAGCKEIEYEVMRDSNDNAIVVCNMENIDPVGVHTGDSIVVAPSQTLSDREYQMLRNTSLRIIRALGIEGGCNVQLALDPYSFQYYVIEVNPRVSRSSALASKATGYPIAKLAAKIAVGLTLDEIVNPVTQKTYACFEPALDYVVSKIPRWPFDKFESANRTLGTQMKATGEVMSIGRNLEESLLKAVRSLELGIYHLELDHLKELDKETMKKRIIKADDERLFIVAEAIRQGVTKEEINEWCEMDFFFLQKVENIVNMEREVKANVGNMEVLQTAKEMGFSDHYIAAAWNKTEREIYDMRKENNMTPVFKMVDTCAAEFESATPYYYSTYADENELIVTDRKSVVVLGSGPIRIGQGVEFDYATVHSVWAIKEAGYEAIIINNNPETVSTDFSISDKLYFEPLTIEDVMHIIDLEKPEGVIVQFGGQTAINLAAKLEEHGVKILGTSLEDLDRAEDRDKFEAALTKLGIPQPVGKTATTVEQAVAIAEEIGYPVLVRPSYVLGGRAMEIVYRQEELLHYMKNAVKVHADHPVLIDRYMVGKEIEVDAISDGENVFIPGIMEHIERAGVHSGDSIGVYPPQSLSEKLKEQIIEHTIALGKGLNIVGLLNIQFVVFKDQVYVIEVNPRASRTVPFLSKITGVPMANVATKVILGQDLVEQGYGTGYHPEEKEVYVKAPVFSFAKLRSVDTTLGPEMKSTGEVMGKDLTLEKALYKGLVASGINIPTHGSVIITVADKDKEEAMEIAKRFHEIGYNLLATAGTAQSLTEQNIPVQVVNKIDSEDYNLLDIIRQGKAQFVINTLTKGKQPARDGFRIRRESVENGVACLTSLDTTRAILRVLESMTFSAHSMKEITQTKRHEVVHA</sequence>
<organism>
    <name type="scientific">Bacillus anthracis (strain CDC 684 / NRRL 3495)</name>
    <dbReference type="NCBI Taxonomy" id="568206"/>
    <lineage>
        <taxon>Bacteria</taxon>
        <taxon>Bacillati</taxon>
        <taxon>Bacillota</taxon>
        <taxon>Bacilli</taxon>
        <taxon>Bacillales</taxon>
        <taxon>Bacillaceae</taxon>
        <taxon>Bacillus</taxon>
        <taxon>Bacillus cereus group</taxon>
    </lineage>
</organism>
<proteinExistence type="inferred from homology"/>
<reference key="1">
    <citation type="submission" date="2008-10" db="EMBL/GenBank/DDBJ databases">
        <title>Genome sequence of Bacillus anthracis str. CDC 684.</title>
        <authorList>
            <person name="Dodson R.J."/>
            <person name="Munk A.C."/>
            <person name="Brettin T."/>
            <person name="Bruce D."/>
            <person name="Detter C."/>
            <person name="Tapia R."/>
            <person name="Han C."/>
            <person name="Sutton G."/>
            <person name="Sims D."/>
        </authorList>
    </citation>
    <scope>NUCLEOTIDE SEQUENCE [LARGE SCALE GENOMIC DNA]</scope>
    <source>
        <strain>CDC 684 / NRRL 3495</strain>
    </source>
</reference>
<feature type="chain" id="PRO_1000164704" description="Carbamoyl phosphate synthase large chain">
    <location>
        <begin position="1"/>
        <end position="1072"/>
    </location>
</feature>
<feature type="domain" description="ATP-grasp 1" evidence="1">
    <location>
        <begin position="133"/>
        <end position="327"/>
    </location>
</feature>
<feature type="domain" description="ATP-grasp 2" evidence="1">
    <location>
        <begin position="671"/>
        <end position="861"/>
    </location>
</feature>
<feature type="domain" description="MGS-like" evidence="1">
    <location>
        <begin position="930"/>
        <end position="1072"/>
    </location>
</feature>
<feature type="region of interest" description="Carboxyphosphate synthetic domain" evidence="1">
    <location>
        <begin position="1"/>
        <end position="401"/>
    </location>
</feature>
<feature type="region of interest" description="Oligomerization domain" evidence="1">
    <location>
        <begin position="402"/>
        <end position="546"/>
    </location>
</feature>
<feature type="region of interest" description="Carbamoyl phosphate synthetic domain" evidence="1">
    <location>
        <begin position="547"/>
        <end position="929"/>
    </location>
</feature>
<feature type="region of interest" description="Allosteric domain" evidence="1">
    <location>
        <begin position="930"/>
        <end position="1072"/>
    </location>
</feature>
<feature type="binding site" evidence="1">
    <location>
        <position position="129"/>
    </location>
    <ligand>
        <name>ATP</name>
        <dbReference type="ChEBI" id="CHEBI:30616"/>
        <label>1</label>
    </ligand>
</feature>
<feature type="binding site" evidence="1">
    <location>
        <position position="169"/>
    </location>
    <ligand>
        <name>ATP</name>
        <dbReference type="ChEBI" id="CHEBI:30616"/>
        <label>1</label>
    </ligand>
</feature>
<feature type="binding site" evidence="1">
    <location>
        <position position="175"/>
    </location>
    <ligand>
        <name>ATP</name>
        <dbReference type="ChEBI" id="CHEBI:30616"/>
        <label>1</label>
    </ligand>
</feature>
<feature type="binding site" evidence="1">
    <location>
        <position position="176"/>
    </location>
    <ligand>
        <name>ATP</name>
        <dbReference type="ChEBI" id="CHEBI:30616"/>
        <label>1</label>
    </ligand>
</feature>
<feature type="binding site" evidence="1">
    <location>
        <position position="208"/>
    </location>
    <ligand>
        <name>ATP</name>
        <dbReference type="ChEBI" id="CHEBI:30616"/>
        <label>1</label>
    </ligand>
</feature>
<feature type="binding site" evidence="1">
    <location>
        <position position="210"/>
    </location>
    <ligand>
        <name>ATP</name>
        <dbReference type="ChEBI" id="CHEBI:30616"/>
        <label>1</label>
    </ligand>
</feature>
<feature type="binding site" evidence="1">
    <location>
        <position position="215"/>
    </location>
    <ligand>
        <name>ATP</name>
        <dbReference type="ChEBI" id="CHEBI:30616"/>
        <label>1</label>
    </ligand>
</feature>
<feature type="binding site" evidence="1">
    <location>
        <position position="241"/>
    </location>
    <ligand>
        <name>ATP</name>
        <dbReference type="ChEBI" id="CHEBI:30616"/>
        <label>1</label>
    </ligand>
</feature>
<feature type="binding site" evidence="1">
    <location>
        <position position="242"/>
    </location>
    <ligand>
        <name>ATP</name>
        <dbReference type="ChEBI" id="CHEBI:30616"/>
        <label>1</label>
    </ligand>
</feature>
<feature type="binding site" evidence="1">
    <location>
        <position position="243"/>
    </location>
    <ligand>
        <name>ATP</name>
        <dbReference type="ChEBI" id="CHEBI:30616"/>
        <label>1</label>
    </ligand>
</feature>
<feature type="binding site" evidence="1">
    <location>
        <position position="284"/>
    </location>
    <ligand>
        <name>ATP</name>
        <dbReference type="ChEBI" id="CHEBI:30616"/>
        <label>1</label>
    </ligand>
</feature>
<feature type="binding site" evidence="1">
    <location>
        <position position="284"/>
    </location>
    <ligand>
        <name>Mg(2+)</name>
        <dbReference type="ChEBI" id="CHEBI:18420"/>
        <label>1</label>
    </ligand>
</feature>
<feature type="binding site" evidence="1">
    <location>
        <position position="284"/>
    </location>
    <ligand>
        <name>Mn(2+)</name>
        <dbReference type="ChEBI" id="CHEBI:29035"/>
        <label>1</label>
    </ligand>
</feature>
<feature type="binding site" evidence="1">
    <location>
        <position position="298"/>
    </location>
    <ligand>
        <name>ATP</name>
        <dbReference type="ChEBI" id="CHEBI:30616"/>
        <label>1</label>
    </ligand>
</feature>
<feature type="binding site" evidence="1">
    <location>
        <position position="298"/>
    </location>
    <ligand>
        <name>Mg(2+)</name>
        <dbReference type="ChEBI" id="CHEBI:18420"/>
        <label>1</label>
    </ligand>
</feature>
<feature type="binding site" evidence="1">
    <location>
        <position position="298"/>
    </location>
    <ligand>
        <name>Mg(2+)</name>
        <dbReference type="ChEBI" id="CHEBI:18420"/>
        <label>2</label>
    </ligand>
</feature>
<feature type="binding site" evidence="1">
    <location>
        <position position="298"/>
    </location>
    <ligand>
        <name>Mn(2+)</name>
        <dbReference type="ChEBI" id="CHEBI:29035"/>
        <label>1</label>
    </ligand>
</feature>
<feature type="binding site" evidence="1">
    <location>
        <position position="298"/>
    </location>
    <ligand>
        <name>Mn(2+)</name>
        <dbReference type="ChEBI" id="CHEBI:29035"/>
        <label>2</label>
    </ligand>
</feature>
<feature type="binding site" evidence="1">
    <location>
        <position position="300"/>
    </location>
    <ligand>
        <name>Mg(2+)</name>
        <dbReference type="ChEBI" id="CHEBI:18420"/>
        <label>2</label>
    </ligand>
</feature>
<feature type="binding site" evidence="1">
    <location>
        <position position="300"/>
    </location>
    <ligand>
        <name>Mn(2+)</name>
        <dbReference type="ChEBI" id="CHEBI:29035"/>
        <label>2</label>
    </ligand>
</feature>
<feature type="binding site" evidence="1">
    <location>
        <position position="707"/>
    </location>
    <ligand>
        <name>ATP</name>
        <dbReference type="ChEBI" id="CHEBI:30616"/>
        <label>2</label>
    </ligand>
</feature>
<feature type="binding site" evidence="1">
    <location>
        <position position="746"/>
    </location>
    <ligand>
        <name>ATP</name>
        <dbReference type="ChEBI" id="CHEBI:30616"/>
        <label>2</label>
    </ligand>
</feature>
<feature type="binding site" evidence="1">
    <location>
        <position position="752"/>
    </location>
    <ligand>
        <name>ATP</name>
        <dbReference type="ChEBI" id="CHEBI:30616"/>
        <label>2</label>
    </ligand>
</feature>
<feature type="binding site" evidence="1">
    <location>
        <position position="777"/>
    </location>
    <ligand>
        <name>ATP</name>
        <dbReference type="ChEBI" id="CHEBI:30616"/>
        <label>2</label>
    </ligand>
</feature>
<feature type="binding site" evidence="1">
    <location>
        <position position="778"/>
    </location>
    <ligand>
        <name>ATP</name>
        <dbReference type="ChEBI" id="CHEBI:30616"/>
        <label>2</label>
    </ligand>
</feature>
<feature type="binding site" evidence="1">
    <location>
        <position position="779"/>
    </location>
    <ligand>
        <name>ATP</name>
        <dbReference type="ChEBI" id="CHEBI:30616"/>
        <label>2</label>
    </ligand>
</feature>
<feature type="binding site" evidence="1">
    <location>
        <position position="780"/>
    </location>
    <ligand>
        <name>ATP</name>
        <dbReference type="ChEBI" id="CHEBI:30616"/>
        <label>2</label>
    </ligand>
</feature>
<feature type="binding site" evidence="1">
    <location>
        <position position="820"/>
    </location>
    <ligand>
        <name>ATP</name>
        <dbReference type="ChEBI" id="CHEBI:30616"/>
        <label>2</label>
    </ligand>
</feature>
<feature type="binding site" evidence="1">
    <location>
        <position position="820"/>
    </location>
    <ligand>
        <name>Mg(2+)</name>
        <dbReference type="ChEBI" id="CHEBI:18420"/>
        <label>3</label>
    </ligand>
</feature>
<feature type="binding site" evidence="1">
    <location>
        <position position="820"/>
    </location>
    <ligand>
        <name>Mn(2+)</name>
        <dbReference type="ChEBI" id="CHEBI:29035"/>
        <label>3</label>
    </ligand>
</feature>
<feature type="binding site" evidence="1">
    <location>
        <position position="832"/>
    </location>
    <ligand>
        <name>ATP</name>
        <dbReference type="ChEBI" id="CHEBI:30616"/>
        <label>2</label>
    </ligand>
</feature>
<feature type="binding site" evidence="1">
    <location>
        <position position="832"/>
    </location>
    <ligand>
        <name>Mg(2+)</name>
        <dbReference type="ChEBI" id="CHEBI:18420"/>
        <label>3</label>
    </ligand>
</feature>
<feature type="binding site" evidence="1">
    <location>
        <position position="832"/>
    </location>
    <ligand>
        <name>Mg(2+)</name>
        <dbReference type="ChEBI" id="CHEBI:18420"/>
        <label>4</label>
    </ligand>
</feature>
<feature type="binding site" evidence="1">
    <location>
        <position position="832"/>
    </location>
    <ligand>
        <name>Mn(2+)</name>
        <dbReference type="ChEBI" id="CHEBI:29035"/>
        <label>3</label>
    </ligand>
</feature>
<feature type="binding site" evidence="1">
    <location>
        <position position="832"/>
    </location>
    <ligand>
        <name>Mn(2+)</name>
        <dbReference type="ChEBI" id="CHEBI:29035"/>
        <label>4</label>
    </ligand>
</feature>
<feature type="binding site" evidence="1">
    <location>
        <position position="834"/>
    </location>
    <ligand>
        <name>Mg(2+)</name>
        <dbReference type="ChEBI" id="CHEBI:18420"/>
        <label>4</label>
    </ligand>
</feature>
<feature type="binding site" evidence="1">
    <location>
        <position position="834"/>
    </location>
    <ligand>
        <name>Mn(2+)</name>
        <dbReference type="ChEBI" id="CHEBI:29035"/>
        <label>4</label>
    </ligand>
</feature>
<protein>
    <recommendedName>
        <fullName evidence="1">Carbamoyl phosphate synthase large chain</fullName>
        <ecNumber evidence="1">6.3.4.16</ecNumber>
        <ecNumber evidence="1">6.3.5.5</ecNumber>
    </recommendedName>
    <alternativeName>
        <fullName evidence="1">Carbamoyl phosphate synthetase ammonia chain</fullName>
    </alternativeName>
</protein>
<gene>
    <name evidence="1" type="primary">carB</name>
    <name type="ordered locus">BAMEG_0606</name>
</gene>
<evidence type="ECO:0000255" key="1">
    <source>
        <dbReference type="HAMAP-Rule" id="MF_01210"/>
    </source>
</evidence>
<accession>C3L740</accession>
<keyword id="KW-0028">Amino-acid biosynthesis</keyword>
<keyword id="KW-0055">Arginine biosynthesis</keyword>
<keyword id="KW-0067">ATP-binding</keyword>
<keyword id="KW-0436">Ligase</keyword>
<keyword id="KW-0460">Magnesium</keyword>
<keyword id="KW-0464">Manganese</keyword>
<keyword id="KW-0479">Metal-binding</keyword>
<keyword id="KW-0547">Nucleotide-binding</keyword>
<keyword id="KW-0665">Pyrimidine biosynthesis</keyword>
<keyword id="KW-0677">Repeat</keyword>